<name>VM2_DEIAC</name>
<accession>P0DM77</accession>
<comment type="function">
    <text evidence="3 4">Inhibit human platelet aggregation induced by ADP, collagen, thrombin or the thromboxane analog U46619 in platelet suspension with IC(50) values of 66-267 nM. Acts by inhibiting fibrinogen interaction with platelet receptors GPIIb/GPIIIa (ITGA2B/ITGB3) (PubMed:9838213). It also inhibits angiogenesis in vivo and in vitro by blocking integrin alpha-V/beta-3 (ITGAV/ITGB3) of endothelial cells and by inducing apoptosis (PubMed:9787163).</text>
</comment>
<comment type="subunit">
    <text evidence="1">Monomer (disintegrin).</text>
</comment>
<comment type="subcellular location">
    <subcellularLocation>
        <location>Secreted</location>
    </subcellularLocation>
</comment>
<comment type="tissue specificity">
    <text>Expressed by the venom gland.</text>
</comment>
<comment type="mass spectrometry"/>
<comment type="miscellaneous">
    <text evidence="6">Negative results: does not inhibit the binding of specific monoclonal antibodies to alpha-2/beta-1 (ITGA2/ITGB1), alpha-3/beta-1 (ITGA3/ITGB1), and alpha-5/beta-1 (ITGA5/ITGB1) integrins.</text>
</comment>
<comment type="miscellaneous">
    <text>The disintegrin belongs to the short disintegrin subfamily.</text>
</comment>
<comment type="similarity">
    <text evidence="5">Belongs to the venom metalloproteinase (M12B) family. P-II subfamily. P-IIa sub-subfamily.</text>
</comment>
<comment type="caution">
    <text evidence="5">Lys-Phe-Leu-Lys residues at positions 15-18 are predicted by comparison with orthologs and according to the data of amino acid composition. Pyroglutamate residue at position 1 has been predicted by comparison with orthologs and because the pyroglutamate aminopeptidase was used to allow sequencing. It is noteworthy that the theoritical mass of the peptide does not correspond to the measured mass of 5241 Da.</text>
</comment>
<proteinExistence type="evidence at protein level"/>
<dbReference type="SMR" id="P0DM77"/>
<dbReference type="GO" id="GO:0005576">
    <property type="term" value="C:extracellular region"/>
    <property type="evidence" value="ECO:0007669"/>
    <property type="project" value="UniProtKB-SubCell"/>
</dbReference>
<dbReference type="GO" id="GO:0090729">
    <property type="term" value="F:toxin activity"/>
    <property type="evidence" value="ECO:0007669"/>
    <property type="project" value="UniProtKB-KW"/>
</dbReference>
<dbReference type="Gene3D" id="4.10.70.10">
    <property type="entry name" value="Disintegrin domain"/>
    <property type="match status" value="1"/>
</dbReference>
<dbReference type="InterPro" id="IPR001762">
    <property type="entry name" value="Disintegrin_dom"/>
</dbReference>
<dbReference type="InterPro" id="IPR036436">
    <property type="entry name" value="Disintegrin_dom_sf"/>
</dbReference>
<dbReference type="Pfam" id="PF00200">
    <property type="entry name" value="Disintegrin"/>
    <property type="match status" value="1"/>
</dbReference>
<dbReference type="PRINTS" id="PR00289">
    <property type="entry name" value="DISINTEGRIN"/>
</dbReference>
<dbReference type="SMART" id="SM00050">
    <property type="entry name" value="DISIN"/>
    <property type="match status" value="1"/>
</dbReference>
<dbReference type="SUPFAM" id="SSF57552">
    <property type="entry name" value="Blood coagulation inhibitor (disintegrin)"/>
    <property type="match status" value="1"/>
</dbReference>
<dbReference type="PROSITE" id="PS50214">
    <property type="entry name" value="DISINTEGRIN_2"/>
    <property type="match status" value="1"/>
</dbReference>
<keyword id="KW-1217">Cell adhesion impairing toxin</keyword>
<keyword id="KW-0903">Direct protein sequencing</keyword>
<keyword id="KW-1015">Disulfide bond</keyword>
<keyword id="KW-1199">Hemostasis impairing toxin</keyword>
<keyword id="KW-1201">Platelet aggregation inhibiting toxin</keyword>
<keyword id="KW-0873">Pyrrolidone carboxylic acid</keyword>
<keyword id="KW-0964">Secreted</keyword>
<keyword id="KW-0800">Toxin</keyword>
<protein>
    <recommendedName>
        <fullName>Disintegrin accutin</fullName>
    </recommendedName>
</protein>
<feature type="chain" id="PRO_0000424449" description="Disintegrin accutin">
    <location>
        <begin position="1"/>
        <end position="48"/>
    </location>
</feature>
<feature type="domain" description="Disintegrin" evidence="2">
    <location>
        <begin position="1"/>
        <end position="48"/>
    </location>
</feature>
<feature type="short sequence motif" description="Cell attachment site">
    <location>
        <begin position="27"/>
        <end position="29"/>
    </location>
</feature>
<feature type="modified residue" description="Pyrrolidone carboxylic acid" evidence="4">
    <location>
        <position position="1"/>
    </location>
</feature>
<feature type="disulfide bond" evidence="2">
    <location>
        <begin position="5"/>
        <end position="11"/>
    </location>
</feature>
<feature type="disulfide bond" evidence="2">
    <location>
        <begin position="10"/>
        <end position="35"/>
    </location>
</feature>
<feature type="disulfide bond" evidence="2">
    <location>
        <begin position="23"/>
        <end position="42"/>
    </location>
</feature>
<feature type="unsure residue">
    <location>
        <position position="1"/>
    </location>
</feature>
<feature type="unsure residue">
    <location>
        <begin position="15"/>
        <end position="18"/>
    </location>
</feature>
<reference key="1">
    <citation type="journal article" date="1998" name="Biochim. Biophys. Acta">
        <title>A new short chain RGD-containing disintegrin, accutin, inhibits the common pathway of human platelet aggregation.</title>
        <authorList>
            <person name="Yeh C.H."/>
            <person name="Peng H.C."/>
            <person name="Yih J.B."/>
            <person name="Huang T.F."/>
        </authorList>
    </citation>
    <scope>PROTEIN SEQUENCE</scope>
    <scope>AMINO-ACID COMPOSITION</scope>
    <scope>FUNCTION</scope>
    <scope>PYROGLUTAMATE FORMATION AT GLN-1</scope>
    <scope>MASS SPECTROMETRY</scope>
    <source>
        <tissue>Venom</tissue>
    </source>
</reference>
<reference key="2">
    <citation type="journal article" date="1998" name="Blood">
        <title>Accutin, a new disintegrin, inhibits angiogenesis in vitro and in vivo by acting as integrin alphavbeta3 antagonist and inducing apoptosis.</title>
        <authorList>
            <person name="Yeh C.H."/>
            <person name="Peng H.C."/>
            <person name="Huang T.F."/>
        </authorList>
    </citation>
    <scope>FUNCTION</scope>
    <scope>BIOASSAY</scope>
</reference>
<sequence>QGAQCTAGPCCWPCKFLKEGTICRRARGDDLDDYCNGISADCPRNPYY</sequence>
<evidence type="ECO:0000250" key="1"/>
<evidence type="ECO:0000255" key="2">
    <source>
        <dbReference type="PROSITE-ProRule" id="PRU00068"/>
    </source>
</evidence>
<evidence type="ECO:0000269" key="3">
    <source>
    </source>
</evidence>
<evidence type="ECO:0000269" key="4">
    <source>
    </source>
</evidence>
<evidence type="ECO:0000305" key="5"/>
<evidence type="ECO:0000305" key="6">
    <source>
    </source>
</evidence>
<organism>
    <name type="scientific">Deinagkistrodon acutus</name>
    <name type="common">Hundred-pace snake</name>
    <name type="synonym">Agkistrodon acutus</name>
    <dbReference type="NCBI Taxonomy" id="36307"/>
    <lineage>
        <taxon>Eukaryota</taxon>
        <taxon>Metazoa</taxon>
        <taxon>Chordata</taxon>
        <taxon>Craniata</taxon>
        <taxon>Vertebrata</taxon>
        <taxon>Euteleostomi</taxon>
        <taxon>Lepidosauria</taxon>
        <taxon>Squamata</taxon>
        <taxon>Bifurcata</taxon>
        <taxon>Unidentata</taxon>
        <taxon>Episquamata</taxon>
        <taxon>Toxicofera</taxon>
        <taxon>Serpentes</taxon>
        <taxon>Colubroidea</taxon>
        <taxon>Viperidae</taxon>
        <taxon>Crotalinae</taxon>
        <taxon>Deinagkistrodon</taxon>
    </lineage>
</organism>